<accession>A0LWS7</accession>
<name>DNAK_ACIC1</name>
<comment type="function">
    <text evidence="1">Acts as a chaperone.</text>
</comment>
<comment type="induction">
    <text evidence="1">By stress conditions e.g. heat shock.</text>
</comment>
<comment type="similarity">
    <text evidence="1">Belongs to the heat shock protein 70 family.</text>
</comment>
<reference key="1">
    <citation type="journal article" date="2009" name="Genome Res.">
        <title>Complete genome of the cellulolytic thermophile Acidothermus cellulolyticus 11B provides insights into its ecophysiological and evolutionary adaptations.</title>
        <authorList>
            <person name="Barabote R.D."/>
            <person name="Xie G."/>
            <person name="Leu D.H."/>
            <person name="Normand P."/>
            <person name="Necsulea A."/>
            <person name="Daubin V."/>
            <person name="Medigue C."/>
            <person name="Adney W.S."/>
            <person name="Xu X.C."/>
            <person name="Lapidus A."/>
            <person name="Parales R.E."/>
            <person name="Detter C."/>
            <person name="Pujic P."/>
            <person name="Bruce D."/>
            <person name="Lavire C."/>
            <person name="Challacombe J.F."/>
            <person name="Brettin T.S."/>
            <person name="Berry A.M."/>
        </authorList>
    </citation>
    <scope>NUCLEOTIDE SEQUENCE [LARGE SCALE GENOMIC DNA]</scope>
    <source>
        <strain>ATCC 43068 / DSM 8971 / 11B</strain>
    </source>
</reference>
<sequence length="618" mass="66202">MARAVGIDLGTTNSVIAVLEGGEPTVIPNAEGSRTTPSVVAFAKNGEVLVGEVAKRQAVTNAERTIRSVKRHMGTNWTIDIDGKKYTPQEISARILMKLKRDAEAYLGEQISDAVITVPAYFNDAQRQATKEAGQIAGLNVLRIINEPTAAALAYGLDKGEKEQTILVFDLGGGTFDVSLLEIGEGIVEVKATSGDTHLGGDDWDQRIVDHLVTTFKNQHGIDLSKDKMAMQRLKEAAERAKIELSSAMETTINLPYITASSEGPLHLEVKLTRSEFQRMTADLLERCKGPFNQAIKDAGITVNQIDHVILVGGSTRMPAVVDLVRELTGGKEPNKGVNPDEVVAVGACLQAGVLKGEVKDVLLLDVTPLSLGIETKGGVFTKLIERNTTIPTRRSEIFTTAEDNQPSVQIQVYQGEREIAAYNKKLGMFELTGLPPAPRGVPQIEVTFDIDANGIVHVSAKDLATGKEQSMTITGGSALPKEEIERMMRDAEAHAEEDRRRREEAEARNQADTLIYQTEKFLRENADKVPAAEKANVETAIANLKKAMEGSDVTAIRSATEQLATESQKLGAAMYAATQAAAGGSSGSATGATGSASGSAGKDDEVVDAEIVDEGEK</sequence>
<organism>
    <name type="scientific">Acidothermus cellulolyticus (strain ATCC 43068 / DSM 8971 / 11B)</name>
    <dbReference type="NCBI Taxonomy" id="351607"/>
    <lineage>
        <taxon>Bacteria</taxon>
        <taxon>Bacillati</taxon>
        <taxon>Actinomycetota</taxon>
        <taxon>Actinomycetes</taxon>
        <taxon>Acidothermales</taxon>
        <taxon>Acidothermaceae</taxon>
        <taxon>Acidothermus</taxon>
    </lineage>
</organism>
<gene>
    <name evidence="1" type="primary">dnaK</name>
    <name type="ordered locus">Acel_2115</name>
</gene>
<keyword id="KW-0067">ATP-binding</keyword>
<keyword id="KW-0143">Chaperone</keyword>
<keyword id="KW-0547">Nucleotide-binding</keyword>
<keyword id="KW-0597">Phosphoprotein</keyword>
<keyword id="KW-1185">Reference proteome</keyword>
<keyword id="KW-0346">Stress response</keyword>
<dbReference type="EMBL" id="CP000481">
    <property type="protein sequence ID" value="ABK53887.1"/>
    <property type="molecule type" value="Genomic_DNA"/>
</dbReference>
<dbReference type="RefSeq" id="WP_011720950.1">
    <property type="nucleotide sequence ID" value="NC_008578.1"/>
</dbReference>
<dbReference type="SMR" id="A0LWS7"/>
<dbReference type="FunCoup" id="A0LWS7">
    <property type="interactions" value="327"/>
</dbReference>
<dbReference type="STRING" id="351607.Acel_2115"/>
<dbReference type="KEGG" id="ace:Acel_2115"/>
<dbReference type="eggNOG" id="COG0443">
    <property type="taxonomic scope" value="Bacteria"/>
</dbReference>
<dbReference type="HOGENOM" id="CLU_005965_2_4_11"/>
<dbReference type="InParanoid" id="A0LWS7"/>
<dbReference type="OrthoDB" id="9766019at2"/>
<dbReference type="Proteomes" id="UP000008221">
    <property type="component" value="Chromosome"/>
</dbReference>
<dbReference type="GO" id="GO:0005524">
    <property type="term" value="F:ATP binding"/>
    <property type="evidence" value="ECO:0007669"/>
    <property type="project" value="UniProtKB-UniRule"/>
</dbReference>
<dbReference type="GO" id="GO:0140662">
    <property type="term" value="F:ATP-dependent protein folding chaperone"/>
    <property type="evidence" value="ECO:0007669"/>
    <property type="project" value="InterPro"/>
</dbReference>
<dbReference type="GO" id="GO:0051082">
    <property type="term" value="F:unfolded protein binding"/>
    <property type="evidence" value="ECO:0007669"/>
    <property type="project" value="InterPro"/>
</dbReference>
<dbReference type="CDD" id="cd10234">
    <property type="entry name" value="ASKHA_NBD_HSP70_DnaK-like"/>
    <property type="match status" value="1"/>
</dbReference>
<dbReference type="FunFam" id="2.60.34.10:FF:000014">
    <property type="entry name" value="Chaperone protein DnaK HSP70"/>
    <property type="match status" value="1"/>
</dbReference>
<dbReference type="FunFam" id="1.20.1270.10:FF:000001">
    <property type="entry name" value="Molecular chaperone DnaK"/>
    <property type="match status" value="1"/>
</dbReference>
<dbReference type="FunFam" id="3.30.420.40:FF:000071">
    <property type="entry name" value="Molecular chaperone DnaK"/>
    <property type="match status" value="1"/>
</dbReference>
<dbReference type="FunFam" id="3.90.640.10:FF:000003">
    <property type="entry name" value="Molecular chaperone DnaK"/>
    <property type="match status" value="1"/>
</dbReference>
<dbReference type="Gene3D" id="1.20.1270.10">
    <property type="match status" value="1"/>
</dbReference>
<dbReference type="Gene3D" id="3.30.420.40">
    <property type="match status" value="2"/>
</dbReference>
<dbReference type="Gene3D" id="3.90.640.10">
    <property type="entry name" value="Actin, Chain A, domain 4"/>
    <property type="match status" value="1"/>
</dbReference>
<dbReference type="Gene3D" id="2.60.34.10">
    <property type="entry name" value="Substrate Binding Domain Of DNAk, Chain A, domain 1"/>
    <property type="match status" value="1"/>
</dbReference>
<dbReference type="HAMAP" id="MF_00332">
    <property type="entry name" value="DnaK"/>
    <property type="match status" value="1"/>
</dbReference>
<dbReference type="InterPro" id="IPR043129">
    <property type="entry name" value="ATPase_NBD"/>
</dbReference>
<dbReference type="InterPro" id="IPR012725">
    <property type="entry name" value="Chaperone_DnaK"/>
</dbReference>
<dbReference type="InterPro" id="IPR018181">
    <property type="entry name" value="Heat_shock_70_CS"/>
</dbReference>
<dbReference type="InterPro" id="IPR029048">
    <property type="entry name" value="HSP70_C_sf"/>
</dbReference>
<dbReference type="InterPro" id="IPR029047">
    <property type="entry name" value="HSP70_peptide-bd_sf"/>
</dbReference>
<dbReference type="InterPro" id="IPR013126">
    <property type="entry name" value="Hsp_70_fam"/>
</dbReference>
<dbReference type="NCBIfam" id="NF001413">
    <property type="entry name" value="PRK00290.1"/>
    <property type="match status" value="1"/>
</dbReference>
<dbReference type="NCBIfam" id="TIGR02350">
    <property type="entry name" value="prok_dnaK"/>
    <property type="match status" value="1"/>
</dbReference>
<dbReference type="PANTHER" id="PTHR19375">
    <property type="entry name" value="HEAT SHOCK PROTEIN 70KDA"/>
    <property type="match status" value="1"/>
</dbReference>
<dbReference type="Pfam" id="PF00012">
    <property type="entry name" value="HSP70"/>
    <property type="match status" value="2"/>
</dbReference>
<dbReference type="PRINTS" id="PR00301">
    <property type="entry name" value="HEATSHOCK70"/>
</dbReference>
<dbReference type="SUPFAM" id="SSF53067">
    <property type="entry name" value="Actin-like ATPase domain"/>
    <property type="match status" value="2"/>
</dbReference>
<dbReference type="SUPFAM" id="SSF100934">
    <property type="entry name" value="Heat shock protein 70kD (HSP70), C-terminal subdomain"/>
    <property type="match status" value="1"/>
</dbReference>
<dbReference type="SUPFAM" id="SSF100920">
    <property type="entry name" value="Heat shock protein 70kD (HSP70), peptide-binding domain"/>
    <property type="match status" value="1"/>
</dbReference>
<dbReference type="PROSITE" id="PS00297">
    <property type="entry name" value="HSP70_1"/>
    <property type="match status" value="1"/>
</dbReference>
<dbReference type="PROSITE" id="PS00329">
    <property type="entry name" value="HSP70_2"/>
    <property type="match status" value="1"/>
</dbReference>
<dbReference type="PROSITE" id="PS01036">
    <property type="entry name" value="HSP70_3"/>
    <property type="match status" value="1"/>
</dbReference>
<protein>
    <recommendedName>
        <fullName evidence="1">Chaperone protein DnaK</fullName>
    </recommendedName>
    <alternativeName>
        <fullName evidence="1">HSP70</fullName>
    </alternativeName>
    <alternativeName>
        <fullName evidence="1">Heat shock 70 kDa protein</fullName>
    </alternativeName>
    <alternativeName>
        <fullName evidence="1">Heat shock protein 70</fullName>
    </alternativeName>
</protein>
<proteinExistence type="inferred from homology"/>
<feature type="chain" id="PRO_1000059497" description="Chaperone protein DnaK">
    <location>
        <begin position="1"/>
        <end position="618"/>
    </location>
</feature>
<feature type="region of interest" description="Disordered" evidence="2">
    <location>
        <begin position="492"/>
        <end position="513"/>
    </location>
</feature>
<feature type="region of interest" description="Disordered" evidence="2">
    <location>
        <begin position="579"/>
        <end position="618"/>
    </location>
</feature>
<feature type="compositionally biased region" description="Basic and acidic residues" evidence="2">
    <location>
        <begin position="492"/>
        <end position="510"/>
    </location>
</feature>
<feature type="compositionally biased region" description="Low complexity" evidence="2">
    <location>
        <begin position="579"/>
        <end position="601"/>
    </location>
</feature>
<feature type="compositionally biased region" description="Acidic residues" evidence="2">
    <location>
        <begin position="606"/>
        <end position="618"/>
    </location>
</feature>
<feature type="modified residue" description="Phosphothreonine; by autocatalysis" evidence="1">
    <location>
        <position position="175"/>
    </location>
</feature>
<evidence type="ECO:0000255" key="1">
    <source>
        <dbReference type="HAMAP-Rule" id="MF_00332"/>
    </source>
</evidence>
<evidence type="ECO:0000256" key="2">
    <source>
        <dbReference type="SAM" id="MobiDB-lite"/>
    </source>
</evidence>